<protein>
    <recommendedName>
        <fullName evidence="1">Small ribosomal subunit protein uS7</fullName>
    </recommendedName>
    <alternativeName>
        <fullName evidence="2">30S ribosomal protein S7</fullName>
    </alternativeName>
</protein>
<organism>
    <name type="scientific">Pseudomonas putida (strain ATCC 700007 / DSM 6899 / JCM 31910 / BCRC 17059 / LMG 24140 / F1)</name>
    <dbReference type="NCBI Taxonomy" id="351746"/>
    <lineage>
        <taxon>Bacteria</taxon>
        <taxon>Pseudomonadati</taxon>
        <taxon>Pseudomonadota</taxon>
        <taxon>Gammaproteobacteria</taxon>
        <taxon>Pseudomonadales</taxon>
        <taxon>Pseudomonadaceae</taxon>
        <taxon>Pseudomonas</taxon>
    </lineage>
</organism>
<accession>A5VXP3</accession>
<comment type="function">
    <text evidence="1">One of the primary rRNA binding proteins, it binds directly to 16S rRNA where it nucleates assembly of the head domain of the 30S subunit. Is located at the subunit interface close to the decoding center, probably blocks exit of the E-site tRNA.</text>
</comment>
<comment type="subunit">
    <text evidence="1">Part of the 30S ribosomal subunit. Contacts proteins S9 and S11.</text>
</comment>
<comment type="similarity">
    <text evidence="1">Belongs to the universal ribosomal protein uS7 family.</text>
</comment>
<dbReference type="EMBL" id="CP000712">
    <property type="protein sequence ID" value="ABQ76653.1"/>
    <property type="molecule type" value="Genomic_DNA"/>
</dbReference>
<dbReference type="SMR" id="A5VXP3"/>
<dbReference type="KEGG" id="ppf:Pput_0483"/>
<dbReference type="eggNOG" id="COG0049">
    <property type="taxonomic scope" value="Bacteria"/>
</dbReference>
<dbReference type="HOGENOM" id="CLU_072226_1_1_6"/>
<dbReference type="GO" id="GO:0015935">
    <property type="term" value="C:small ribosomal subunit"/>
    <property type="evidence" value="ECO:0007669"/>
    <property type="project" value="InterPro"/>
</dbReference>
<dbReference type="GO" id="GO:0019843">
    <property type="term" value="F:rRNA binding"/>
    <property type="evidence" value="ECO:0007669"/>
    <property type="project" value="UniProtKB-UniRule"/>
</dbReference>
<dbReference type="GO" id="GO:0003735">
    <property type="term" value="F:structural constituent of ribosome"/>
    <property type="evidence" value="ECO:0007669"/>
    <property type="project" value="InterPro"/>
</dbReference>
<dbReference type="GO" id="GO:0000049">
    <property type="term" value="F:tRNA binding"/>
    <property type="evidence" value="ECO:0007669"/>
    <property type="project" value="UniProtKB-UniRule"/>
</dbReference>
<dbReference type="GO" id="GO:0006412">
    <property type="term" value="P:translation"/>
    <property type="evidence" value="ECO:0007669"/>
    <property type="project" value="UniProtKB-UniRule"/>
</dbReference>
<dbReference type="CDD" id="cd14869">
    <property type="entry name" value="uS7_Bacteria"/>
    <property type="match status" value="1"/>
</dbReference>
<dbReference type="FunFam" id="1.10.455.10:FF:000001">
    <property type="entry name" value="30S ribosomal protein S7"/>
    <property type="match status" value="1"/>
</dbReference>
<dbReference type="Gene3D" id="1.10.455.10">
    <property type="entry name" value="Ribosomal protein S7 domain"/>
    <property type="match status" value="1"/>
</dbReference>
<dbReference type="HAMAP" id="MF_00480_B">
    <property type="entry name" value="Ribosomal_uS7_B"/>
    <property type="match status" value="1"/>
</dbReference>
<dbReference type="InterPro" id="IPR000235">
    <property type="entry name" value="Ribosomal_uS7"/>
</dbReference>
<dbReference type="InterPro" id="IPR005717">
    <property type="entry name" value="Ribosomal_uS7_bac/org-type"/>
</dbReference>
<dbReference type="InterPro" id="IPR020606">
    <property type="entry name" value="Ribosomal_uS7_CS"/>
</dbReference>
<dbReference type="InterPro" id="IPR023798">
    <property type="entry name" value="Ribosomal_uS7_dom"/>
</dbReference>
<dbReference type="InterPro" id="IPR036823">
    <property type="entry name" value="Ribosomal_uS7_dom_sf"/>
</dbReference>
<dbReference type="NCBIfam" id="TIGR01029">
    <property type="entry name" value="rpsG_bact"/>
    <property type="match status" value="1"/>
</dbReference>
<dbReference type="PANTHER" id="PTHR11205">
    <property type="entry name" value="RIBOSOMAL PROTEIN S7"/>
    <property type="match status" value="1"/>
</dbReference>
<dbReference type="Pfam" id="PF00177">
    <property type="entry name" value="Ribosomal_S7"/>
    <property type="match status" value="1"/>
</dbReference>
<dbReference type="PIRSF" id="PIRSF002122">
    <property type="entry name" value="RPS7p_RPS7a_RPS5e_RPS7o"/>
    <property type="match status" value="1"/>
</dbReference>
<dbReference type="SUPFAM" id="SSF47973">
    <property type="entry name" value="Ribosomal protein S7"/>
    <property type="match status" value="1"/>
</dbReference>
<dbReference type="PROSITE" id="PS00052">
    <property type="entry name" value="RIBOSOMAL_S7"/>
    <property type="match status" value="1"/>
</dbReference>
<gene>
    <name evidence="1" type="primary">rpsG</name>
    <name type="ordered locus">Pput_0483</name>
</gene>
<sequence>MPRRRVAAKREILDDPKYGSQILAKFMNHVMESGKKAVAERIVYGALDTVKARKNSDPLEIFEKALDAIAPLVEVKSRRVGGATYQVPVEVRPSRRNALAMRWLVDYARKRGEKSMALRLAGELLDAAEGKGAAVKKREDVHRMAEANKAFSHYRF</sequence>
<name>RS7_PSEP1</name>
<evidence type="ECO:0000255" key="1">
    <source>
        <dbReference type="HAMAP-Rule" id="MF_00480"/>
    </source>
</evidence>
<evidence type="ECO:0000305" key="2"/>
<reference key="1">
    <citation type="submission" date="2007-05" db="EMBL/GenBank/DDBJ databases">
        <title>Complete sequence of Pseudomonas putida F1.</title>
        <authorList>
            <consortium name="US DOE Joint Genome Institute"/>
            <person name="Copeland A."/>
            <person name="Lucas S."/>
            <person name="Lapidus A."/>
            <person name="Barry K."/>
            <person name="Detter J.C."/>
            <person name="Glavina del Rio T."/>
            <person name="Hammon N."/>
            <person name="Israni S."/>
            <person name="Dalin E."/>
            <person name="Tice H."/>
            <person name="Pitluck S."/>
            <person name="Chain P."/>
            <person name="Malfatti S."/>
            <person name="Shin M."/>
            <person name="Vergez L."/>
            <person name="Schmutz J."/>
            <person name="Larimer F."/>
            <person name="Land M."/>
            <person name="Hauser L."/>
            <person name="Kyrpides N."/>
            <person name="Lykidis A."/>
            <person name="Parales R."/>
            <person name="Richardson P."/>
        </authorList>
    </citation>
    <scope>NUCLEOTIDE SEQUENCE [LARGE SCALE GENOMIC DNA]</scope>
    <source>
        <strain>ATCC 700007 / DSM 6899 / JCM 31910 / BCRC 17059 / LMG 24140 / F1</strain>
    </source>
</reference>
<feature type="chain" id="PRO_1000014264" description="Small ribosomal subunit protein uS7">
    <location>
        <begin position="1"/>
        <end position="156"/>
    </location>
</feature>
<proteinExistence type="inferred from homology"/>
<keyword id="KW-0687">Ribonucleoprotein</keyword>
<keyword id="KW-0689">Ribosomal protein</keyword>
<keyword id="KW-0694">RNA-binding</keyword>
<keyword id="KW-0699">rRNA-binding</keyword>
<keyword id="KW-0820">tRNA-binding</keyword>